<protein>
    <recommendedName>
        <fullName evidence="1">Ribose 1,5-bisphosphate phosphokinase PhnN</fullName>
        <ecNumber evidence="1">2.7.4.23</ecNumber>
    </recommendedName>
    <alternativeName>
        <fullName evidence="1">Ribose 1,5-bisphosphokinase</fullName>
    </alternativeName>
</protein>
<evidence type="ECO:0000255" key="1">
    <source>
        <dbReference type="HAMAP-Rule" id="MF_00836"/>
    </source>
</evidence>
<feature type="chain" id="PRO_0000412794" description="Ribose 1,5-bisphosphate phosphokinase PhnN">
    <location>
        <begin position="1"/>
        <end position="185"/>
    </location>
</feature>
<feature type="binding site" evidence="1">
    <location>
        <begin position="10"/>
        <end position="17"/>
    </location>
    <ligand>
        <name>ATP</name>
        <dbReference type="ChEBI" id="CHEBI:30616"/>
    </ligand>
</feature>
<accession>A6V255</accession>
<keyword id="KW-0067">ATP-binding</keyword>
<keyword id="KW-0547">Nucleotide-binding</keyword>
<keyword id="KW-0808">Transferase</keyword>
<organism>
    <name type="scientific">Pseudomonas paraeruginosa (strain DSM 24068 / PA7)</name>
    <name type="common">Pseudomonas aeruginosa (strain PA7)</name>
    <dbReference type="NCBI Taxonomy" id="381754"/>
    <lineage>
        <taxon>Bacteria</taxon>
        <taxon>Pseudomonadati</taxon>
        <taxon>Pseudomonadota</taxon>
        <taxon>Gammaproteobacteria</taxon>
        <taxon>Pseudomonadales</taxon>
        <taxon>Pseudomonadaceae</taxon>
        <taxon>Pseudomonas</taxon>
        <taxon>Pseudomonas paraeruginosa</taxon>
    </lineage>
</organism>
<reference key="1">
    <citation type="submission" date="2007-06" db="EMBL/GenBank/DDBJ databases">
        <authorList>
            <person name="Dodson R.J."/>
            <person name="Harkins D."/>
            <person name="Paulsen I.T."/>
        </authorList>
    </citation>
    <scope>NUCLEOTIDE SEQUENCE [LARGE SCALE GENOMIC DNA]</scope>
    <source>
        <strain>DSM 24068 / PA7</strain>
    </source>
</reference>
<sequence length="185" mass="20184">MTGRLIYLMGPSGSGKDSLLQAAREPLALRGCRIVRRVITRSAEAVGEDAQAVTPAQFDTLERASAFAMSWRANGLCYGIPVQIDEWLAQGYDVLVNGSRGYLAQARRRYPDLLAVLLGVQPEVLRQRLLARGRESPEEIEARLARNAEFAAGLEGPLFQLDNSGELDDTVRALLAWLGGDRACA</sequence>
<dbReference type="EC" id="2.7.4.23" evidence="1"/>
<dbReference type="EMBL" id="CP000744">
    <property type="protein sequence ID" value="ABR86492.1"/>
    <property type="molecule type" value="Genomic_DNA"/>
</dbReference>
<dbReference type="RefSeq" id="WP_012074876.1">
    <property type="nucleotide sequence ID" value="NC_009656.1"/>
</dbReference>
<dbReference type="SMR" id="A6V255"/>
<dbReference type="GeneID" id="77220111"/>
<dbReference type="KEGG" id="pap:PSPA7_1756"/>
<dbReference type="HOGENOM" id="CLU_102477_0_0_6"/>
<dbReference type="UniPathway" id="UPA00087">
    <property type="reaction ID" value="UER00175"/>
</dbReference>
<dbReference type="Proteomes" id="UP000001582">
    <property type="component" value="Chromosome"/>
</dbReference>
<dbReference type="GO" id="GO:0005524">
    <property type="term" value="F:ATP binding"/>
    <property type="evidence" value="ECO:0007669"/>
    <property type="project" value="UniProtKB-KW"/>
</dbReference>
<dbReference type="GO" id="GO:0033863">
    <property type="term" value="F:ribose 1,5-bisphosphate phosphokinase activity"/>
    <property type="evidence" value="ECO:0007669"/>
    <property type="project" value="UniProtKB-UniRule"/>
</dbReference>
<dbReference type="GO" id="GO:0006015">
    <property type="term" value="P:5-phosphoribose 1-diphosphate biosynthetic process"/>
    <property type="evidence" value="ECO:0007669"/>
    <property type="project" value="UniProtKB-UniRule"/>
</dbReference>
<dbReference type="GO" id="GO:0019634">
    <property type="term" value="P:organic phosphonate metabolic process"/>
    <property type="evidence" value="ECO:0007669"/>
    <property type="project" value="UniProtKB-UniRule"/>
</dbReference>
<dbReference type="FunFam" id="3.40.50.300:FF:000979">
    <property type="entry name" value="Ribose 1,5-bisphosphate phosphokinase PhnN"/>
    <property type="match status" value="1"/>
</dbReference>
<dbReference type="Gene3D" id="3.40.50.300">
    <property type="entry name" value="P-loop containing nucleotide triphosphate hydrolases"/>
    <property type="match status" value="1"/>
</dbReference>
<dbReference type="HAMAP" id="MF_00836">
    <property type="entry name" value="PhnN"/>
    <property type="match status" value="1"/>
</dbReference>
<dbReference type="InterPro" id="IPR008145">
    <property type="entry name" value="GK/Ca_channel_bsu"/>
</dbReference>
<dbReference type="InterPro" id="IPR027417">
    <property type="entry name" value="P-loop_NTPase"/>
</dbReference>
<dbReference type="InterPro" id="IPR012699">
    <property type="entry name" value="PhnN"/>
</dbReference>
<dbReference type="NCBIfam" id="TIGR02322">
    <property type="entry name" value="phosphon_PhnN"/>
    <property type="match status" value="1"/>
</dbReference>
<dbReference type="NCBIfam" id="NF007485">
    <property type="entry name" value="PRK10078.1"/>
    <property type="match status" value="1"/>
</dbReference>
<dbReference type="SMART" id="SM00072">
    <property type="entry name" value="GuKc"/>
    <property type="match status" value="1"/>
</dbReference>
<dbReference type="SUPFAM" id="SSF52540">
    <property type="entry name" value="P-loop containing nucleoside triphosphate hydrolases"/>
    <property type="match status" value="1"/>
</dbReference>
<proteinExistence type="inferred from homology"/>
<gene>
    <name evidence="1" type="primary">phnN</name>
    <name type="ordered locus">PSPA7_1756</name>
</gene>
<comment type="function">
    <text evidence="1">Catalyzes the phosphorylation of ribose 1,5-bisphosphate to 5-phospho-D-ribosyl alpha-1-diphosphate (PRPP).</text>
</comment>
<comment type="catalytic activity">
    <reaction evidence="1">
        <text>alpha-D-ribose 1,5-bisphosphate + ATP = 5-phospho-alpha-D-ribose 1-diphosphate + ADP</text>
        <dbReference type="Rhea" id="RHEA:20109"/>
        <dbReference type="ChEBI" id="CHEBI:30616"/>
        <dbReference type="ChEBI" id="CHEBI:58017"/>
        <dbReference type="ChEBI" id="CHEBI:68688"/>
        <dbReference type="ChEBI" id="CHEBI:456216"/>
        <dbReference type="EC" id="2.7.4.23"/>
    </reaction>
</comment>
<comment type="pathway">
    <text evidence="1">Metabolic intermediate biosynthesis; 5-phospho-alpha-D-ribose 1-diphosphate biosynthesis; 5-phospho-alpha-D-ribose 1-diphosphate from D-ribose 5-phosphate (route II): step 3/3.</text>
</comment>
<comment type="similarity">
    <text evidence="1">Belongs to the ribose 1,5-bisphosphokinase family.</text>
</comment>
<name>PHNN_PSEP7</name>